<comment type="function">
    <text evidence="1">Catalyzes the rearrangement of 1-deoxy-D-xylulose 5-phosphate (DXP) to produce the thiazole phosphate moiety of thiamine. Sulfur is provided by the thiocarboxylate moiety of the carrier protein ThiS. In vitro, sulfur can be provided by H(2)S.</text>
</comment>
<comment type="catalytic activity">
    <reaction evidence="1">
        <text>[ThiS sulfur-carrier protein]-C-terminal-Gly-aminoethanethioate + 2-iminoacetate + 1-deoxy-D-xylulose 5-phosphate = [ThiS sulfur-carrier protein]-C-terminal Gly-Gly + 2-[(2R,5Z)-2-carboxy-4-methylthiazol-5(2H)-ylidene]ethyl phosphate + 2 H2O + H(+)</text>
        <dbReference type="Rhea" id="RHEA:26297"/>
        <dbReference type="Rhea" id="RHEA-COMP:12909"/>
        <dbReference type="Rhea" id="RHEA-COMP:19908"/>
        <dbReference type="ChEBI" id="CHEBI:15377"/>
        <dbReference type="ChEBI" id="CHEBI:15378"/>
        <dbReference type="ChEBI" id="CHEBI:57792"/>
        <dbReference type="ChEBI" id="CHEBI:62899"/>
        <dbReference type="ChEBI" id="CHEBI:77846"/>
        <dbReference type="ChEBI" id="CHEBI:90778"/>
        <dbReference type="ChEBI" id="CHEBI:232372"/>
        <dbReference type="EC" id="2.8.1.10"/>
    </reaction>
</comment>
<comment type="pathway">
    <text evidence="1">Cofactor biosynthesis; thiamine diphosphate biosynthesis.</text>
</comment>
<comment type="subunit">
    <text evidence="1">Homotetramer. Forms heterodimers with either ThiH or ThiS.</text>
</comment>
<comment type="subcellular location">
    <subcellularLocation>
        <location evidence="1">Cytoplasm</location>
    </subcellularLocation>
</comment>
<comment type="similarity">
    <text evidence="1">Belongs to the ThiG family.</text>
</comment>
<reference key="1">
    <citation type="journal article" date="2006" name="Nat. Biotechnol.">
        <title>Complete genome sequence of the entomopathogenic and metabolically versatile soil bacterium Pseudomonas entomophila.</title>
        <authorList>
            <person name="Vodovar N."/>
            <person name="Vallenet D."/>
            <person name="Cruveiller S."/>
            <person name="Rouy Z."/>
            <person name="Barbe V."/>
            <person name="Acosta C."/>
            <person name="Cattolico L."/>
            <person name="Jubin C."/>
            <person name="Lajus A."/>
            <person name="Segurens B."/>
            <person name="Vacherie B."/>
            <person name="Wincker P."/>
            <person name="Weissenbach J."/>
            <person name="Lemaitre B."/>
            <person name="Medigue C."/>
            <person name="Boccard F."/>
        </authorList>
    </citation>
    <scope>NUCLEOTIDE SEQUENCE [LARGE SCALE GENOMIC DNA]</scope>
    <source>
        <strain>L48</strain>
    </source>
</reference>
<evidence type="ECO:0000255" key="1">
    <source>
        <dbReference type="HAMAP-Rule" id="MF_00443"/>
    </source>
</evidence>
<dbReference type="EC" id="2.8.1.10" evidence="1"/>
<dbReference type="EMBL" id="CT573326">
    <property type="protein sequence ID" value="CAK13269.1"/>
    <property type="molecule type" value="Genomic_DNA"/>
</dbReference>
<dbReference type="RefSeq" id="WP_011531729.1">
    <property type="nucleotide sequence ID" value="NC_008027.1"/>
</dbReference>
<dbReference type="SMR" id="Q1IGD3"/>
<dbReference type="STRING" id="384676.PSEEN0307"/>
<dbReference type="GeneID" id="32803650"/>
<dbReference type="KEGG" id="pen:PSEEN0307"/>
<dbReference type="eggNOG" id="COG2022">
    <property type="taxonomic scope" value="Bacteria"/>
</dbReference>
<dbReference type="HOGENOM" id="CLU_062233_1_1_6"/>
<dbReference type="OrthoDB" id="9805935at2"/>
<dbReference type="UniPathway" id="UPA00060"/>
<dbReference type="Proteomes" id="UP000000658">
    <property type="component" value="Chromosome"/>
</dbReference>
<dbReference type="GO" id="GO:0005737">
    <property type="term" value="C:cytoplasm"/>
    <property type="evidence" value="ECO:0007669"/>
    <property type="project" value="UniProtKB-SubCell"/>
</dbReference>
<dbReference type="GO" id="GO:1990107">
    <property type="term" value="F:thiazole synthase activity"/>
    <property type="evidence" value="ECO:0007669"/>
    <property type="project" value="UniProtKB-EC"/>
</dbReference>
<dbReference type="GO" id="GO:0009229">
    <property type="term" value="P:thiamine diphosphate biosynthetic process"/>
    <property type="evidence" value="ECO:0007669"/>
    <property type="project" value="UniProtKB-UniRule"/>
</dbReference>
<dbReference type="CDD" id="cd04728">
    <property type="entry name" value="ThiG"/>
    <property type="match status" value="1"/>
</dbReference>
<dbReference type="Gene3D" id="3.20.20.70">
    <property type="entry name" value="Aldolase class I"/>
    <property type="match status" value="1"/>
</dbReference>
<dbReference type="HAMAP" id="MF_00443">
    <property type="entry name" value="ThiG"/>
    <property type="match status" value="1"/>
</dbReference>
<dbReference type="InterPro" id="IPR013785">
    <property type="entry name" value="Aldolase_TIM"/>
</dbReference>
<dbReference type="InterPro" id="IPR033983">
    <property type="entry name" value="Thiazole_synthase_ThiG"/>
</dbReference>
<dbReference type="InterPro" id="IPR008867">
    <property type="entry name" value="ThiG"/>
</dbReference>
<dbReference type="PANTHER" id="PTHR34266">
    <property type="entry name" value="THIAZOLE SYNTHASE"/>
    <property type="match status" value="1"/>
</dbReference>
<dbReference type="PANTHER" id="PTHR34266:SF2">
    <property type="entry name" value="THIAZOLE SYNTHASE"/>
    <property type="match status" value="1"/>
</dbReference>
<dbReference type="Pfam" id="PF05690">
    <property type="entry name" value="ThiG"/>
    <property type="match status" value="1"/>
</dbReference>
<dbReference type="SUPFAM" id="SSF110399">
    <property type="entry name" value="ThiG-like"/>
    <property type="match status" value="1"/>
</dbReference>
<proteinExistence type="inferred from homology"/>
<feature type="chain" id="PRO_1000026028" description="Thiazole synthase">
    <location>
        <begin position="1"/>
        <end position="270"/>
    </location>
</feature>
<feature type="active site" description="Schiff-base intermediate with DXP" evidence="1">
    <location>
        <position position="112"/>
    </location>
</feature>
<feature type="binding site" evidence="1">
    <location>
        <position position="173"/>
    </location>
    <ligand>
        <name>1-deoxy-D-xylulose 5-phosphate</name>
        <dbReference type="ChEBI" id="CHEBI:57792"/>
    </ligand>
</feature>
<feature type="binding site" evidence="1">
    <location>
        <begin position="199"/>
        <end position="200"/>
    </location>
    <ligand>
        <name>1-deoxy-D-xylulose 5-phosphate</name>
        <dbReference type="ChEBI" id="CHEBI:57792"/>
    </ligand>
</feature>
<feature type="binding site" evidence="1">
    <location>
        <begin position="221"/>
        <end position="222"/>
    </location>
    <ligand>
        <name>1-deoxy-D-xylulose 5-phosphate</name>
        <dbReference type="ChEBI" id="CHEBI:57792"/>
    </ligand>
</feature>
<organism>
    <name type="scientific">Pseudomonas entomophila (strain L48)</name>
    <dbReference type="NCBI Taxonomy" id="384676"/>
    <lineage>
        <taxon>Bacteria</taxon>
        <taxon>Pseudomonadati</taxon>
        <taxon>Pseudomonadota</taxon>
        <taxon>Gammaproteobacteria</taxon>
        <taxon>Pseudomonadales</taxon>
        <taxon>Pseudomonadaceae</taxon>
        <taxon>Pseudomonas</taxon>
    </lineage>
</organism>
<accession>Q1IGD3</accession>
<name>THIG_PSEE4</name>
<sequence>MSNVRSDKPFVLAGRTFQSRLLVGTGKYRDMEETRLATEASGAEIVTVAVRRTNLGQNAGEPNLLDVLSPEKYTILPNTAGCFDAVEAVRTCRLARELLDGYKSHENRTLVKLEVLADQKTLFPNVIETLKAAEVLVKDGFDVMVYTSDDPIIARQLAEAGCIAVMPLAGLIGTGLGICNPYNLQIILEESKVPVLVDAGVGTASDATIAMEMGCEAVLMNSAIAHAQQPVLMAEAMKHAILAGRMAYLAGRMPKKLYASASSPLEGLIK</sequence>
<gene>
    <name evidence="1" type="primary">thiG</name>
    <name type="ordered locus">PSEEN0307</name>
</gene>
<keyword id="KW-0963">Cytoplasm</keyword>
<keyword id="KW-0704">Schiff base</keyword>
<keyword id="KW-0784">Thiamine biosynthesis</keyword>
<keyword id="KW-0808">Transferase</keyword>
<protein>
    <recommendedName>
        <fullName evidence="1">Thiazole synthase</fullName>
        <ecNumber evidence="1">2.8.1.10</ecNumber>
    </recommendedName>
</protein>